<protein>
    <recommendedName>
        <fullName evidence="1">Envelope glycoprotein B</fullName>
        <shortName evidence="1">gB</shortName>
    </recommendedName>
</protein>
<accession>P08666</accession>
<accession>P89450</accession>
<gene>
    <name evidence="1" type="primary">gB</name>
    <name type="ORF">UL27</name>
</gene>
<keyword id="KW-1015">Disulfide bond</keyword>
<keyword id="KW-0325">Glycoprotein</keyword>
<keyword id="KW-1032">Host cell membrane</keyword>
<keyword id="KW-1039">Host endosome</keyword>
<keyword id="KW-1040">Host Golgi apparatus</keyword>
<keyword id="KW-1043">Host membrane</keyword>
<keyword id="KW-0945">Host-virus interaction</keyword>
<keyword id="KW-0472">Membrane</keyword>
<keyword id="KW-1185">Reference proteome</keyword>
<keyword id="KW-0732">Signal</keyword>
<keyword id="KW-0812">Transmembrane</keyword>
<keyword id="KW-1133">Transmembrane helix</keyword>
<keyword id="KW-1161">Viral attachment to host cell</keyword>
<keyword id="KW-0261">Viral envelope protein</keyword>
<keyword id="KW-0946">Virion</keyword>
<keyword id="KW-1160">Virus entry into host cell</keyword>
<comment type="function">
    <text evidence="1">Envelope glycoprotein that forms spikes at the surface of virion envelope. Essential for the initial attachment to heparan sulfate moieties of the host cell surface proteoglycans. Involved in fusion of viral and cellular membranes leading to virus entry into the host cell. Following initial binding to its host receptors, membrane fusion is mediated by the fusion machinery composed at least of gB and the heterodimer gH/gL. May be involved in the fusion between the virion envelope and the outer nuclear membrane during virion egress.</text>
</comment>
<comment type="subunit">
    <text evidence="1">Homotrimer; disulfide-linked. Binds to heparan sulfate proteoglycans. Interacts with gH/gL heterodimer.</text>
</comment>
<comment type="subcellular location">
    <subcellularLocation>
        <location evidence="1">Virion membrane</location>
        <topology evidence="1">Single-pass type I membrane protein</topology>
    </subcellularLocation>
    <subcellularLocation>
        <location evidence="1">Host cell membrane</location>
        <topology evidence="1">Single-pass type I membrane protein</topology>
    </subcellularLocation>
    <subcellularLocation>
        <location evidence="1">Host endosome membrane</location>
        <topology evidence="1">Single-pass type I membrane protein</topology>
    </subcellularLocation>
    <subcellularLocation>
        <location evidence="1">Host Golgi apparatus membrane</location>
        <topology evidence="1">Single-pass type I membrane protein</topology>
    </subcellularLocation>
    <text evidence="1">During virion morphogenesis, this protein probably accumulates in the endosomes and trans-Golgi where secondary envelopment occurs. It is probably transported to the cell surface from where it is endocytosed and directed to the trans-Golgi network (TGN).</text>
</comment>
<comment type="similarity">
    <text evidence="1">Belongs to the herpesviridae glycoprotein B family.</text>
</comment>
<name>GB_HHV2H</name>
<reference key="1">
    <citation type="journal article" date="1986" name="Virology">
        <title>The nucleotide sequence of the gB glycoprotein gene of HSV-2 and comparison with the corresponding gene of HSV-1.</title>
        <authorList>
            <person name="Bzik D.J."/>
            <person name="Debroy C."/>
            <person name="Fox B.A."/>
            <person name="Pederson N.E."/>
            <person name="Person S."/>
        </authorList>
    </citation>
    <scope>NUCLEOTIDE SEQUENCE [GENOMIC DNA]</scope>
</reference>
<reference key="2">
    <citation type="journal article" date="1998" name="J. Virol.">
        <title>The genome sequence of herpes simplex virus type 2.</title>
        <authorList>
            <person name="Dolan A."/>
            <person name="Jamieson F.E."/>
            <person name="Cunningham C."/>
            <person name="Barnett B.C."/>
            <person name="McGeoch D.J."/>
        </authorList>
    </citation>
    <scope>NUCLEOTIDE SEQUENCE [LARGE SCALE GENOMIC DNA]</scope>
</reference>
<dbReference type="EMBL" id="M14923">
    <property type="protein sequence ID" value="AAA66440.1"/>
    <property type="molecule type" value="Genomic_DNA"/>
</dbReference>
<dbReference type="EMBL" id="Z86099">
    <property type="protein sequence ID" value="CAB06752.1"/>
    <property type="molecule type" value="Genomic_DNA"/>
</dbReference>
<dbReference type="PIR" id="A25611">
    <property type="entry name" value="VGBEK2"/>
</dbReference>
<dbReference type="SMR" id="P08666"/>
<dbReference type="GlyCosmos" id="P08666">
    <property type="glycosylation" value="6 sites, No reported glycans"/>
</dbReference>
<dbReference type="Proteomes" id="UP000001874">
    <property type="component" value="Segment"/>
</dbReference>
<dbReference type="GO" id="GO:0044175">
    <property type="term" value="C:host cell endosome membrane"/>
    <property type="evidence" value="ECO:0007669"/>
    <property type="project" value="UniProtKB-SubCell"/>
</dbReference>
<dbReference type="GO" id="GO:0044178">
    <property type="term" value="C:host cell Golgi membrane"/>
    <property type="evidence" value="ECO:0007669"/>
    <property type="project" value="UniProtKB-SubCell"/>
</dbReference>
<dbReference type="GO" id="GO:0020002">
    <property type="term" value="C:host cell plasma membrane"/>
    <property type="evidence" value="ECO:0007669"/>
    <property type="project" value="UniProtKB-SubCell"/>
</dbReference>
<dbReference type="GO" id="GO:0016020">
    <property type="term" value="C:membrane"/>
    <property type="evidence" value="ECO:0007669"/>
    <property type="project" value="UniProtKB-KW"/>
</dbReference>
<dbReference type="GO" id="GO:0019031">
    <property type="term" value="C:viral envelope"/>
    <property type="evidence" value="ECO:0007669"/>
    <property type="project" value="UniProtKB-KW"/>
</dbReference>
<dbReference type="GO" id="GO:0055036">
    <property type="term" value="C:virion membrane"/>
    <property type="evidence" value="ECO:0007669"/>
    <property type="project" value="UniProtKB-SubCell"/>
</dbReference>
<dbReference type="GO" id="GO:0046718">
    <property type="term" value="P:symbiont entry into host cell"/>
    <property type="evidence" value="ECO:0007669"/>
    <property type="project" value="UniProtKB-KW"/>
</dbReference>
<dbReference type="GO" id="GO:0019062">
    <property type="term" value="P:virion attachment to host cell"/>
    <property type="evidence" value="ECO:0007669"/>
    <property type="project" value="UniProtKB-KW"/>
</dbReference>
<dbReference type="FunFam" id="1.20.5.1890:FF:000001">
    <property type="entry name" value="Envelope glycoprotein B"/>
    <property type="match status" value="1"/>
</dbReference>
<dbReference type="FunFam" id="2.30.29.100:FF:000001">
    <property type="entry name" value="Envelope glycoprotein B"/>
    <property type="match status" value="1"/>
</dbReference>
<dbReference type="FunFam" id="2.30.30.1230:FF:000001">
    <property type="entry name" value="Envelope glycoprotein B"/>
    <property type="match status" value="1"/>
</dbReference>
<dbReference type="FunFam" id="6.10.250.3280:FF:000001">
    <property type="entry name" value="Envelope glycoprotein B"/>
    <property type="match status" value="1"/>
</dbReference>
<dbReference type="Gene3D" id="1.20.5.1890">
    <property type="match status" value="1"/>
</dbReference>
<dbReference type="Gene3D" id="2.30.29.100">
    <property type="match status" value="1"/>
</dbReference>
<dbReference type="Gene3D" id="2.30.30.1230">
    <property type="match status" value="1"/>
</dbReference>
<dbReference type="Gene3D" id="6.10.250.3280">
    <property type="match status" value="1"/>
</dbReference>
<dbReference type="HAMAP" id="MF_04032">
    <property type="entry name" value="HSV_GB"/>
    <property type="match status" value="1"/>
</dbReference>
<dbReference type="InterPro" id="IPR035377">
    <property type="entry name" value="Glycoprot_B_PH1"/>
</dbReference>
<dbReference type="InterPro" id="IPR035381">
    <property type="entry name" value="Glycoprot_B_PH2"/>
</dbReference>
<dbReference type="InterPro" id="IPR038631">
    <property type="entry name" value="Glycoprot_B_PH2_sf"/>
</dbReference>
<dbReference type="InterPro" id="IPR055341">
    <property type="entry name" value="Glycoprotein_B_ecto_C"/>
</dbReference>
<dbReference type="InterPro" id="IPR000234">
    <property type="entry name" value="Herpes_Glycoprot_B"/>
</dbReference>
<dbReference type="Pfam" id="PF17416">
    <property type="entry name" value="Glycoprot_B_PH1"/>
    <property type="match status" value="1"/>
</dbReference>
<dbReference type="Pfam" id="PF17417">
    <property type="entry name" value="Glycoprot_B_PH2"/>
    <property type="match status" value="1"/>
</dbReference>
<dbReference type="Pfam" id="PF00606">
    <property type="entry name" value="Glycoprotein_B"/>
    <property type="match status" value="1"/>
</dbReference>
<dbReference type="SUPFAM" id="SSF161008">
    <property type="entry name" value="Viral glycoprotein ectodomain-like"/>
    <property type="match status" value="1"/>
</dbReference>
<proteinExistence type="inferred from homology"/>
<organismHost>
    <name type="scientific">Homo sapiens</name>
    <name type="common">Human</name>
    <dbReference type="NCBI Taxonomy" id="9606"/>
</organismHost>
<feature type="signal peptide" evidence="1">
    <location>
        <begin position="1"/>
        <end position="22"/>
    </location>
</feature>
<feature type="chain" id="PRO_0000038164" description="Envelope glycoprotein B" evidence="1">
    <location>
        <begin position="23"/>
        <end position="904"/>
    </location>
</feature>
<feature type="topological domain" description="Virion surface" evidence="1">
    <location>
        <begin position="23"/>
        <end position="771"/>
    </location>
</feature>
<feature type="transmembrane region" description="Helical" evidence="1">
    <location>
        <begin position="772"/>
        <end position="792"/>
    </location>
</feature>
<feature type="topological domain" description="Intravirion" evidence="1">
    <location>
        <begin position="793"/>
        <end position="904"/>
    </location>
</feature>
<feature type="region of interest" description="Disordered" evidence="2">
    <location>
        <begin position="40"/>
        <end position="83"/>
    </location>
</feature>
<feature type="region of interest" description="Involved in fusion and/or binding to host membrane" evidence="1">
    <location>
        <begin position="168"/>
        <end position="174"/>
    </location>
</feature>
<feature type="region of interest" description="Involved in fusion and/or binding to host membrane" evidence="1">
    <location>
        <begin position="253"/>
        <end position="260"/>
    </location>
</feature>
<feature type="region of interest" description="Disordered" evidence="2">
    <location>
        <begin position="467"/>
        <end position="490"/>
    </location>
</feature>
<feature type="region of interest" description="Hydrophobic membrane proximal region" evidence="1">
    <location>
        <begin position="716"/>
        <end position="769"/>
    </location>
</feature>
<feature type="region of interest" description="Hydrophobic membrane proximal region">
    <location>
        <begin position="728"/>
        <end position="768"/>
    </location>
</feature>
<feature type="region of interest" description="Disordered" evidence="2">
    <location>
        <begin position="816"/>
        <end position="835"/>
    </location>
</feature>
<feature type="region of interest" description="Disordered" evidence="2">
    <location>
        <begin position="883"/>
        <end position="904"/>
    </location>
</feature>
<feature type="short sequence motif" description="Golgi targeting" evidence="1">
    <location>
        <begin position="849"/>
        <end position="852"/>
    </location>
</feature>
<feature type="short sequence motif" description="Internalization motif" evidence="1">
    <location>
        <begin position="889"/>
        <end position="892"/>
    </location>
</feature>
<feature type="compositionally biased region" description="Basic residues" evidence="2">
    <location>
        <begin position="60"/>
        <end position="70"/>
    </location>
</feature>
<feature type="glycosylation site" description="N-linked (GlcNAc...) asparagine; by host" evidence="1">
    <location>
        <position position="82"/>
    </location>
</feature>
<feature type="glycosylation site" description="N-linked (GlcNAc...) asparagine; by host" evidence="1">
    <location>
        <position position="136"/>
    </location>
</feature>
<feature type="glycosylation site" description="N-linked (GlcNAc...) asparagine; by host" evidence="1">
    <location>
        <position position="393"/>
    </location>
</feature>
<feature type="glycosylation site" description="N-linked (GlcNAc...) asparagine; by host" evidence="1">
    <location>
        <position position="425"/>
    </location>
</feature>
<feature type="glycosylation site" description="N-linked (GlcNAc...) asparagine; by host" evidence="1">
    <location>
        <position position="486"/>
    </location>
</feature>
<feature type="glycosylation site" description="N-linked (GlcNAc...) asparagine; by host" evidence="1">
    <location>
        <position position="671"/>
    </location>
</feature>
<feature type="disulfide bond" evidence="1">
    <location>
        <begin position="111"/>
        <end position="570"/>
    </location>
</feature>
<feature type="disulfide bond" evidence="1">
    <location>
        <begin position="128"/>
        <end position="526"/>
    </location>
</feature>
<feature type="disulfide bond" evidence="1">
    <location>
        <begin position="202"/>
        <end position="266"/>
    </location>
</feature>
<feature type="disulfide bond" evidence="1">
    <location>
        <begin position="359"/>
        <end position="407"/>
    </location>
</feature>
<feature type="disulfide bond" evidence="1">
    <location>
        <begin position="593"/>
        <end position="630"/>
    </location>
</feature>
<feature type="sequence conflict" description="In Ref. 1; AAA66440." evidence="3" ref="1">
    <original>L</original>
    <variation>V</variation>
    <location>
        <position position="92"/>
    </location>
</feature>
<feature type="sequence conflict" description="In Ref. 1; AAA66440." evidence="3" ref="1">
    <original>T</original>
    <variation>A</variation>
    <location>
        <position position="198"/>
    </location>
</feature>
<feature type="sequence conflict" description="In Ref. 1; AAA66440." evidence="3" ref="1">
    <original>S</original>
    <variation>T</variation>
    <location>
        <position position="308"/>
    </location>
</feature>
<feature type="sequence conflict" description="In Ref. 1; AAA66440." evidence="3" ref="1">
    <original>L</original>
    <variation>Q</variation>
    <location>
        <position position="438"/>
    </location>
</feature>
<feature type="sequence conflict" description="In Ref. 1; AAA66440." evidence="3" ref="1">
    <original>S</original>
    <variation>A</variation>
    <location>
        <position position="568"/>
    </location>
</feature>
<feature type="sequence conflict" description="In Ref. 1; AAA66440." evidence="3" ref="1">
    <original>EL</original>
    <variation>DV</variation>
    <location>
        <begin position="619"/>
        <end position="620"/>
    </location>
</feature>
<feature type="sequence conflict" description="In Ref. 1; AAA66440." evidence="3" ref="1">
    <original>R</original>
    <variation>G</variation>
    <location>
        <position position="636"/>
    </location>
</feature>
<organism>
    <name type="scientific">Human herpesvirus 2 (strain HG52)</name>
    <name type="common">HHV-2</name>
    <name type="synonym">Human herpes simplex virus 2</name>
    <dbReference type="NCBI Taxonomy" id="10315"/>
    <lineage>
        <taxon>Viruses</taxon>
        <taxon>Duplodnaviria</taxon>
        <taxon>Heunggongvirae</taxon>
        <taxon>Peploviricota</taxon>
        <taxon>Herviviricetes</taxon>
        <taxon>Herpesvirales</taxon>
        <taxon>Orthoherpesviridae</taxon>
        <taxon>Alphaherpesvirinae</taxon>
        <taxon>Simplexvirus</taxon>
        <taxon>Simplexvirus humanalpha2</taxon>
        <taxon>Human herpesvirus 2</taxon>
    </lineage>
</organism>
<sequence>MRGGGLICALVVGALVAAVASAAPAAPAAPRASGGVAATVAANGGPASRPPPVPSPATTKARKRKTKKPPKRPEATPPPDANATVAAGHATLRAHLREIKVENADAQFYVCPPPTGATVVQFEQPRRCPTRPEGQNYTEGIAVVFKENIAPYKFKATMYYKDVTVSQVWFGHRYSQFMGIFEDRAPVPFEEVIDKINTKGVCRSTAKYVRNNMETTAFHRDDHETDMELKPAKVATRTSRGWHTTDLKYNPSRVEAFHRYGTTVNCIVEEVDARSVYPYDEFVLATGDFVYMSPFYGYREGSHTEHTSYAADRFKQVDGFYARDLTTKARATSPTTRNLLTTPKFTVAWDWVPKRPAVCTMTKWQEVDEMLRAEYGGSFRFSSDAISTTFTTNLTEYSLSRVDLGDCIGRDAREAIDRMFARKYNATHIKVGQPQYYLATGGFLIAYQPLLSNTLAELYVREYMREQDRKPRNATPAPLREAPSANASVERIKTTSSIEFARLQFTYNHIQRHVNDMLGRIAVAWCELQNHELTLWNEARKLNPNAIASATVGRRVSARMLGDVMAVSTCVPVAPDNVIVQNSMRVSSRPGTCYSRPLVSFRYEDQGPLIEGQLGENNELRLTRDALEPCTVGHRRYFIFGGGYVYFEEYAYSHQLSRADVTTVSTFIDLNITMLEDHEFVPLEVYTRHEIKDSGLLDYTEVQRRNQLHDLRFADIDTVIRADANAAMFAGLCAFFEGMGDLGRAVGKVVMGVVGGVVSAVSGVSSFMSNPFGALAVGLLVLAGLVAAFFAFRYVLQLQRNPMKALYPLTTKELKTSDPGGVGGEGEEGAEGGGFDEAKLAEAREMIRYMALVSAMERTEHKARKKGTSALLSSKVTNMVLRKRNKARYSPLHNEDEAGDEDEL</sequence>
<evidence type="ECO:0000255" key="1">
    <source>
        <dbReference type="HAMAP-Rule" id="MF_04032"/>
    </source>
</evidence>
<evidence type="ECO:0000256" key="2">
    <source>
        <dbReference type="SAM" id="MobiDB-lite"/>
    </source>
</evidence>
<evidence type="ECO:0000305" key="3"/>